<gene>
    <name evidence="14" type="primary">sur-6</name>
    <name evidence="14" type="ORF">F26E4.1</name>
</gene>
<sequence length="495" mass="57078">MVMEVDEPAVAATTSQNQPQEHANDFDMDTSEGPIENDETFEPVDQINWKFNQVKGNIDADVHTEADVISCVEFSHDGEYLATGDKGGRVVIFQRDQSGKYVKGVRSREYNVYSTFQSHEPEFDYLKSLEIDEKINQIRWLKKKNAANFILSTNDKTIKLWKISERERKIGDDAWNLPRTNRINTSSFRGRLQIPSIVPMELIVEASPRRVYGNAHTYHVNSISVNSDQETFLSADDLRVNLWNLEITNESFNIVDIKPANMEELTEVITAAEFHPTQCNWFVYSSSKGSIRLCDMRDRALCDAYAKIFEEPEDPQSRSFFSEIIASVSDVKFSHNGRYLLTRDYLTVKVWDLNMESQPVETYPVHNYLRTKLCALYENDSIFDKFECDWSGDDKHILTGSYHNLFRSYARGNNQDAKTWEARPQEPHSQLRSRFVVPSAKRKRNNLSSSGETTEEDLSSDQLQFDRKILHTAWHPKDNIIALAATNNLYIFSDV</sequence>
<comment type="function">
    <text evidence="4 5 6 7">Probable regulatory subunit of serine/threonine phosphatase let-92. Together with let-92 and constant regulatory subunit paa-1, positively regulates centriole duplication during early embryonic cell divisions by preventing the degradation of sas-5 and kinase zyg-1 (PubMed:21497766). In addition, during vulva development, may play a role with phosphatase let-92 and regulatory subunit paa-1 in the induction of vulva cell precursors by positively regulating let-60/Ras-MAP kinase signaling, probably by promoting lin-45 activation (PubMed:10521400, PubMed:14724126). In intestinal epithelial cells, may play a role in the late secretory pathway probably by regulating the exocyst, a protein complex involved in targeting secretory vesicles to the plasma membrane (PubMed:24192838).</text>
</comment>
<comment type="subunit">
    <text evidence="6 8 9">Part of a complex consisting of a common heterodimeric core enzyme, composed of catalytic subunit let-92 and constant regulatory subunit paa-1, that associates with a variety of regulatory subunits which confer distinct properties to the holoenzyme (Probable). Interacts with let-92 (PubMed:21497766).</text>
</comment>
<comment type="subcellular location">
    <subcellularLocation>
        <location evidence="6">Cytoplasm</location>
    </subcellularLocation>
</comment>
<comment type="disruption phenotype">
    <text evidence="4 5 6 7">RNAi-mediated knockdown causes severe embryonic lethality (PubMed:10521400). In mutants, during the first embryonic divisions, P1 cell initiates division prior to AB cell, spindles appear abnormal or collapse during anaphase and chromatin bridges and supernumerary centrosomes are often detected (PubMed:14724126). In addition, RNAi-mediated knockdown causes a partial defect in centriole duplication during the first embryonic divisions where 24% of spindles are monopolar and 47% have asymmetric spindles, a decrease in the spindle protein sas-5 levels and occasional bridging of chromatin with no obvious defects in cell cycle progression or mitotic exit (PubMed:21497766). The few surviving animals of RNAi-mediated knockdown lack a vulva resulting from defects in vulva cell induction, vulva precursor cell (VPC) generation and in vulval execution lineage, and are slightly uncoordinated (PubMed:10521400). In L4 larvae mutants, somatic mpk-1/ERK phosphorylation is also severely reduced (PubMed:14724126). In intestinal epithelial cells, RNAi-mediated knockdown causes an accumulation of SNARE proteins including snb-1, snap-29 and syx-4 (PubMed:24192838). RNAi-mediated knockdown at the L1 larval stage in the exocyst component exoc-8 (ok2523) mutant background results in lethality (PubMed:24192838).</text>
</comment>
<comment type="similarity">
    <text evidence="2">Belongs to the phosphatase 2A regulatory subunit B family.</text>
</comment>
<keyword id="KW-0963">Cytoplasm</keyword>
<keyword id="KW-1185">Reference proteome</keyword>
<keyword id="KW-0677">Repeat</keyword>
<keyword id="KW-0853">WD repeat</keyword>
<accession>G5EDR3</accession>
<proteinExistence type="evidence at protein level"/>
<dbReference type="EMBL" id="AF174643">
    <property type="protein sequence ID" value="AAD51977.1"/>
    <property type="molecule type" value="mRNA"/>
</dbReference>
<dbReference type="EMBL" id="BX284601">
    <property type="protein sequence ID" value="CAB03008.1"/>
    <property type="molecule type" value="Genomic_DNA"/>
</dbReference>
<dbReference type="PIR" id="T21422">
    <property type="entry name" value="T21422"/>
</dbReference>
<dbReference type="RefSeq" id="NP_492591.1">
    <property type="nucleotide sequence ID" value="NM_060190.8"/>
</dbReference>
<dbReference type="SMR" id="G5EDR3"/>
<dbReference type="ComplexPortal" id="CPX-1366">
    <property type="entry name" value="PP2A-SUR-6 phosphatase complex"/>
</dbReference>
<dbReference type="FunCoup" id="G5EDR3">
    <property type="interactions" value="2625"/>
</dbReference>
<dbReference type="IntAct" id="G5EDR3">
    <property type="interactions" value="2"/>
</dbReference>
<dbReference type="STRING" id="6239.F26E4.1.1"/>
<dbReference type="PaxDb" id="6239-F26E4.1"/>
<dbReference type="PeptideAtlas" id="G5EDR3"/>
<dbReference type="EnsemblMetazoa" id="F26E4.1.1">
    <property type="protein sequence ID" value="F26E4.1.1"/>
    <property type="gene ID" value="WBGene00006352"/>
</dbReference>
<dbReference type="GeneID" id="172826"/>
<dbReference type="KEGG" id="cel:CELE_F26E4.1"/>
<dbReference type="AGR" id="WB:WBGene00006352"/>
<dbReference type="CTD" id="172826"/>
<dbReference type="WormBase" id="F26E4.1">
    <property type="protein sequence ID" value="CE09685"/>
    <property type="gene ID" value="WBGene00006352"/>
    <property type="gene designation" value="sur-6"/>
</dbReference>
<dbReference type="eggNOG" id="KOG1354">
    <property type="taxonomic scope" value="Eukaryota"/>
</dbReference>
<dbReference type="GeneTree" id="ENSGT00950000182864"/>
<dbReference type="HOGENOM" id="CLU_021713_3_3_1"/>
<dbReference type="InParanoid" id="G5EDR3"/>
<dbReference type="OMA" id="LVPMELI"/>
<dbReference type="OrthoDB" id="6274823at2759"/>
<dbReference type="PhylomeDB" id="G5EDR3"/>
<dbReference type="Reactome" id="R-CEL-2995383">
    <property type="pathway name" value="Initiation of Nuclear Envelope (NE) Reformation"/>
</dbReference>
<dbReference type="Reactome" id="R-CEL-69231">
    <property type="pathway name" value="Cyclin D associated events in G1"/>
</dbReference>
<dbReference type="Reactome" id="R-CEL-69273">
    <property type="pathway name" value="Cyclin A/B1/B2 associated events during G2/M transition"/>
</dbReference>
<dbReference type="Reactome" id="R-CEL-975957">
    <property type="pathway name" value="Nonsense Mediated Decay (NMD) enhanced by the Exon Junction Complex (EJC)"/>
</dbReference>
<dbReference type="Reactome" id="R-CEL-9860927">
    <property type="pathway name" value="Turbulent (oscillatory, disturbed) flow shear stress activates signaling by PIEZO1 and integrins in endothelial cells"/>
</dbReference>
<dbReference type="SignaLink" id="G5EDR3"/>
<dbReference type="PRO" id="PR:G5EDR3"/>
<dbReference type="Proteomes" id="UP000001940">
    <property type="component" value="Chromosome I"/>
</dbReference>
<dbReference type="Bgee" id="WBGene00006352">
    <property type="expression patterns" value="Expressed in embryo and 4 other cell types or tissues"/>
</dbReference>
<dbReference type="GO" id="GO:0005829">
    <property type="term" value="C:cytosol"/>
    <property type="evidence" value="ECO:0000318"/>
    <property type="project" value="GO_Central"/>
</dbReference>
<dbReference type="GO" id="GO:0000159">
    <property type="term" value="C:protein phosphatase type 2A complex"/>
    <property type="evidence" value="ECO:0000318"/>
    <property type="project" value="GO_Central"/>
</dbReference>
<dbReference type="GO" id="GO:0019888">
    <property type="term" value="F:protein phosphatase regulator activity"/>
    <property type="evidence" value="ECO:0000318"/>
    <property type="project" value="GO_Central"/>
</dbReference>
<dbReference type="GO" id="GO:0098534">
    <property type="term" value="P:centriole assembly"/>
    <property type="evidence" value="ECO:0000303"/>
    <property type="project" value="ComplexPortal"/>
</dbReference>
<dbReference type="GO" id="GO:0009792">
    <property type="term" value="P:embryo development ending in birth or egg hatching"/>
    <property type="evidence" value="ECO:0000315"/>
    <property type="project" value="WormBase"/>
</dbReference>
<dbReference type="GO" id="GO:0002119">
    <property type="term" value="P:nematode larval development"/>
    <property type="evidence" value="ECO:0000316"/>
    <property type="project" value="WormBase"/>
</dbReference>
<dbReference type="GO" id="GO:0040026">
    <property type="term" value="P:positive regulation of vulval development"/>
    <property type="evidence" value="ECO:0000315"/>
    <property type="project" value="WormBase"/>
</dbReference>
<dbReference type="GO" id="GO:0040028">
    <property type="term" value="P:regulation of vulval development"/>
    <property type="evidence" value="ECO:0000303"/>
    <property type="project" value="ComplexPortal"/>
</dbReference>
<dbReference type="FunFam" id="2.130.10.10:FF:001147">
    <property type="entry name" value="Serine/threonine-protein phosphatase 2A 55 kDa regulatory subunit B"/>
    <property type="match status" value="1"/>
</dbReference>
<dbReference type="Gene3D" id="2.130.10.10">
    <property type="entry name" value="YVTN repeat-like/Quinoprotein amine dehydrogenase"/>
    <property type="match status" value="2"/>
</dbReference>
<dbReference type="InterPro" id="IPR000009">
    <property type="entry name" value="PP2A_PR55"/>
</dbReference>
<dbReference type="InterPro" id="IPR015943">
    <property type="entry name" value="WD40/YVTN_repeat-like_dom_sf"/>
</dbReference>
<dbReference type="InterPro" id="IPR036322">
    <property type="entry name" value="WD40_repeat_dom_sf"/>
</dbReference>
<dbReference type="InterPro" id="IPR001680">
    <property type="entry name" value="WD40_rpt"/>
</dbReference>
<dbReference type="PANTHER" id="PTHR11871">
    <property type="entry name" value="PROTEIN PHOSPHATASE PP2A REGULATORY SUBUNIT B"/>
    <property type="match status" value="1"/>
</dbReference>
<dbReference type="Pfam" id="PF00400">
    <property type="entry name" value="WD40"/>
    <property type="match status" value="3"/>
</dbReference>
<dbReference type="PIRSF" id="PIRSF037309">
    <property type="entry name" value="PP2A_PR55"/>
    <property type="match status" value="1"/>
</dbReference>
<dbReference type="PRINTS" id="PR00600">
    <property type="entry name" value="PP2APR55"/>
</dbReference>
<dbReference type="SMART" id="SM00320">
    <property type="entry name" value="WD40"/>
    <property type="match status" value="6"/>
</dbReference>
<dbReference type="SUPFAM" id="SSF50978">
    <property type="entry name" value="WD40 repeat-like"/>
    <property type="match status" value="1"/>
</dbReference>
<dbReference type="PROSITE" id="PS00678">
    <property type="entry name" value="WD_REPEATS_1"/>
    <property type="match status" value="1"/>
</dbReference>
<feature type="chain" id="PRO_0000437752" description="Serine/threonine-protein phosphatase 2A regulatory subunit sur-6" evidence="11">
    <location>
        <begin position="1"/>
        <end position="495"/>
    </location>
</feature>
<feature type="repeat" description="WD 1" evidence="1">
    <location>
        <begin position="64"/>
        <end position="103"/>
    </location>
</feature>
<feature type="repeat" description="WD 2" evidence="1">
    <location>
        <begin position="130"/>
        <end position="171"/>
    </location>
</feature>
<feature type="repeat" description="WD 3" evidence="1">
    <location>
        <begin position="215"/>
        <end position="253"/>
    </location>
</feature>
<feature type="repeat" description="WD 4" evidence="1">
    <location>
        <begin position="264"/>
        <end position="304"/>
    </location>
</feature>
<feature type="repeat" description="WD 5" evidence="1">
    <location>
        <begin position="323"/>
        <end position="361"/>
    </location>
</feature>
<feature type="repeat" description="WD 6" evidence="1">
    <location>
        <begin position="378"/>
        <end position="419"/>
    </location>
</feature>
<feature type="repeat" description="WD 7" evidence="1">
    <location>
        <begin position="464"/>
        <end position="495"/>
    </location>
</feature>
<feature type="region of interest" description="Disordered" evidence="3">
    <location>
        <begin position="1"/>
        <end position="27"/>
    </location>
</feature>
<feature type="region of interest" description="Disordered" evidence="3">
    <location>
        <begin position="439"/>
        <end position="459"/>
    </location>
</feature>
<feature type="compositionally biased region" description="Polar residues" evidence="3">
    <location>
        <begin position="12"/>
        <end position="21"/>
    </location>
</feature>
<feature type="mutagenesis site" description="In cs24; viable with no visible phenotype. Suppresses multivulva formation in a let-60 n1046 mutant background." evidence="4">
    <original>E</original>
    <variation>K</variation>
    <location>
        <position position="230"/>
    </location>
</feature>
<feature type="mutagenesis site" description="In ku123; viable with no visible phenotype. Suppresses multivulva formation in a let-60 n1046 mutant background." evidence="4">
    <original>C</original>
    <variation>Y</variation>
    <location>
        <position position="302"/>
    </location>
</feature>
<name>2AB1_CAEEL</name>
<reference evidence="12" key="1">
    <citation type="journal article" date="1999" name="Genes Dev.">
        <title>A PP2A regulatory subunit positively regulates Ras-mediated signaling during Caenorhabditis elegans vulval induction.</title>
        <authorList>
            <person name="Sieburth D.S."/>
            <person name="Sundaram M."/>
            <person name="Howard R.M."/>
            <person name="Han M."/>
        </authorList>
    </citation>
    <scope>NUCLEOTIDE SEQUENCE [MRNA]</scope>
    <scope>FUNCTION</scope>
    <scope>DISRUPTION PHENOTYPE</scope>
    <scope>MUTAGENESIS OF GLU-230 AND CYS-302</scope>
    <source>
        <strain evidence="12">Bristol N2</strain>
    </source>
</reference>
<reference evidence="13" key="2">
    <citation type="journal article" date="1998" name="Science">
        <title>Genome sequence of the nematode C. elegans: a platform for investigating biology.</title>
        <authorList>
            <consortium name="The C. elegans sequencing consortium"/>
        </authorList>
    </citation>
    <scope>NUCLEOTIDE SEQUENCE [LARGE SCALE GENOMIC DNA]</scope>
    <source>
        <strain evidence="13">Bristol N2</strain>
    </source>
</reference>
<reference evidence="11" key="3">
    <citation type="journal article" date="2004" name="Development">
        <title>C. elegans SUR-6/PR55 cooperates with LET-92/protein phosphatase 2A and promotes Raf activity independently of inhibitory Akt phosphorylation sites.</title>
        <authorList>
            <person name="Kao G."/>
            <person name="Tuck S."/>
            <person name="Baillie D."/>
            <person name="Sundaram M.V."/>
        </authorList>
    </citation>
    <scope>FUNCTION</scope>
    <scope>DISRUPTION PHENOTYPE</scope>
</reference>
<reference evidence="11" key="4">
    <citation type="journal article" date="2011" name="Dev. Cell">
        <title>Protein phosphatase 2A-SUR-6/B55 regulates centriole duplication in C. elegans by controlling the levels of centriole assembly factors.</title>
        <authorList>
            <person name="Song M.H."/>
            <person name="Liu Y."/>
            <person name="Anderson D.E."/>
            <person name="Jahng W.J."/>
            <person name="O'Connell K.F."/>
        </authorList>
    </citation>
    <scope>FUNCTION</scope>
    <scope>INTERACTION WITH LET-92</scope>
    <scope>SUBCELLULAR LOCATION</scope>
    <scope>DISRUPTION PHENOTYPE</scope>
</reference>
<reference evidence="11" key="5">
    <citation type="journal article" date="2014" name="G3 (Bethesda)">
        <title>par-1, atypical pkc, and PP2A/B55 sur-6 are implicated in the regulation of exocyst-mediated membrane trafficking in Caenorhabditis elegans.</title>
        <authorList>
            <person name="Jiu Y."/>
            <person name="Hasygar K."/>
            <person name="Tang L."/>
            <person name="Liu Y."/>
            <person name="Holmberg C.I."/>
            <person name="Buerglin T.R."/>
            <person name="Hietakangas V."/>
            <person name="Jaentti J."/>
        </authorList>
    </citation>
    <scope>FUNCTION</scope>
    <scope>DISRUPTION PHENOTYPE</scope>
</reference>
<evidence type="ECO:0000255" key="1"/>
<evidence type="ECO:0000255" key="2">
    <source>
        <dbReference type="RuleBase" id="RU331113"/>
    </source>
</evidence>
<evidence type="ECO:0000256" key="3">
    <source>
        <dbReference type="SAM" id="MobiDB-lite"/>
    </source>
</evidence>
<evidence type="ECO:0000269" key="4">
    <source>
    </source>
</evidence>
<evidence type="ECO:0000269" key="5">
    <source>
    </source>
</evidence>
<evidence type="ECO:0000269" key="6">
    <source>
    </source>
</evidence>
<evidence type="ECO:0000269" key="7">
    <source>
    </source>
</evidence>
<evidence type="ECO:0000303" key="8">
    <source>
    </source>
</evidence>
<evidence type="ECO:0000303" key="9">
    <source>
    </source>
</evidence>
<evidence type="ECO:0000303" key="10">
    <source>
    </source>
</evidence>
<evidence type="ECO:0000305" key="11"/>
<evidence type="ECO:0000312" key="12">
    <source>
        <dbReference type="EMBL" id="AAD51977.1"/>
    </source>
</evidence>
<evidence type="ECO:0000312" key="13">
    <source>
        <dbReference type="Proteomes" id="UP000001940"/>
    </source>
</evidence>
<evidence type="ECO:0000312" key="14">
    <source>
        <dbReference type="WormBase" id="F26E4.1"/>
    </source>
</evidence>
<protein>
    <recommendedName>
        <fullName evidence="11">Serine/threonine-protein phosphatase 2A regulatory subunit sur-6</fullName>
    </recommendedName>
    <alternativeName>
        <fullName evidence="11">Serine/threonine-protein phosphatase 2A 55 kDa regulatory subunit sur-6</fullName>
    </alternativeName>
    <alternativeName>
        <fullName evidence="11">Serine/threonine-protein phosphatase 2A regulatory subunit B sur-6</fullName>
        <shortName evidence="9 10">SUR-6/B55</shortName>
        <shortName evidence="8">SUR-6/PR55</shortName>
    </alternativeName>
</protein>
<organism evidence="13">
    <name type="scientific">Caenorhabditis elegans</name>
    <dbReference type="NCBI Taxonomy" id="6239"/>
    <lineage>
        <taxon>Eukaryota</taxon>
        <taxon>Metazoa</taxon>
        <taxon>Ecdysozoa</taxon>
        <taxon>Nematoda</taxon>
        <taxon>Chromadorea</taxon>
        <taxon>Rhabditida</taxon>
        <taxon>Rhabditina</taxon>
        <taxon>Rhabditomorpha</taxon>
        <taxon>Rhabditoidea</taxon>
        <taxon>Rhabditidae</taxon>
        <taxon>Peloderinae</taxon>
        <taxon>Caenorhabditis</taxon>
    </lineage>
</organism>